<comment type="function">
    <text evidence="1">Forms part of the ribosomal stalk which helps the ribosome interact with GTP-bound translation factors.</text>
</comment>
<comment type="subunit">
    <text evidence="1">Part of the ribosomal stalk of the 50S ribosomal subunit. Interacts with L10 and the large rRNA to form the base of the stalk. L10 forms an elongated spine to which L12 dimers bind in a sequential fashion forming a multimeric L10(L12)X complex.</text>
</comment>
<comment type="PTM">
    <text evidence="1">One or more lysine residues are methylated.</text>
</comment>
<comment type="similarity">
    <text evidence="1">Belongs to the universal ribosomal protein uL11 family.</text>
</comment>
<accession>P66055</accession>
<accession>Q92F27</accession>
<organism>
    <name type="scientific">Listeria innocua serovar 6a (strain ATCC BAA-680 / CLIP 11262)</name>
    <dbReference type="NCBI Taxonomy" id="272626"/>
    <lineage>
        <taxon>Bacteria</taxon>
        <taxon>Bacillati</taxon>
        <taxon>Bacillota</taxon>
        <taxon>Bacilli</taxon>
        <taxon>Bacillales</taxon>
        <taxon>Listeriaceae</taxon>
        <taxon>Listeria</taxon>
    </lineage>
</organism>
<name>RL11_LISIN</name>
<keyword id="KW-0488">Methylation</keyword>
<keyword id="KW-0687">Ribonucleoprotein</keyword>
<keyword id="KW-0689">Ribosomal protein</keyword>
<keyword id="KW-0694">RNA-binding</keyword>
<keyword id="KW-0699">rRNA-binding</keyword>
<reference key="1">
    <citation type="journal article" date="2001" name="Science">
        <title>Comparative genomics of Listeria species.</title>
        <authorList>
            <person name="Glaser P."/>
            <person name="Frangeul L."/>
            <person name="Buchrieser C."/>
            <person name="Rusniok C."/>
            <person name="Amend A."/>
            <person name="Baquero F."/>
            <person name="Berche P."/>
            <person name="Bloecker H."/>
            <person name="Brandt P."/>
            <person name="Chakraborty T."/>
            <person name="Charbit A."/>
            <person name="Chetouani F."/>
            <person name="Couve E."/>
            <person name="de Daruvar A."/>
            <person name="Dehoux P."/>
            <person name="Domann E."/>
            <person name="Dominguez-Bernal G."/>
            <person name="Duchaud E."/>
            <person name="Durant L."/>
            <person name="Dussurget O."/>
            <person name="Entian K.-D."/>
            <person name="Fsihi H."/>
            <person name="Garcia-del Portillo F."/>
            <person name="Garrido P."/>
            <person name="Gautier L."/>
            <person name="Goebel W."/>
            <person name="Gomez-Lopez N."/>
            <person name="Hain T."/>
            <person name="Hauf J."/>
            <person name="Jackson D."/>
            <person name="Jones L.-M."/>
            <person name="Kaerst U."/>
            <person name="Kreft J."/>
            <person name="Kuhn M."/>
            <person name="Kunst F."/>
            <person name="Kurapkat G."/>
            <person name="Madueno E."/>
            <person name="Maitournam A."/>
            <person name="Mata Vicente J."/>
            <person name="Ng E."/>
            <person name="Nedjari H."/>
            <person name="Nordsiek G."/>
            <person name="Novella S."/>
            <person name="de Pablos B."/>
            <person name="Perez-Diaz J.-C."/>
            <person name="Purcell R."/>
            <person name="Remmel B."/>
            <person name="Rose M."/>
            <person name="Schlueter T."/>
            <person name="Simoes N."/>
            <person name="Tierrez A."/>
            <person name="Vazquez-Boland J.-A."/>
            <person name="Voss H."/>
            <person name="Wehland J."/>
            <person name="Cossart P."/>
        </authorList>
    </citation>
    <scope>NUCLEOTIDE SEQUENCE [LARGE SCALE GENOMIC DNA]</scope>
    <source>
        <strain>ATCC BAA-680 / CLIP 11262</strain>
    </source>
</reference>
<protein>
    <recommendedName>
        <fullName evidence="1">Large ribosomal subunit protein uL11</fullName>
    </recommendedName>
    <alternativeName>
        <fullName evidence="2">50S ribosomal protein L11</fullName>
    </alternativeName>
</protein>
<gene>
    <name evidence="1" type="primary">rplK</name>
    <name type="ordered locus">lin0280</name>
</gene>
<sequence length="141" mass="14860">MAKKVIKEVKLQIPAGKANPAPPVGPALGQAGVNIMGFCKEFNARTADQAGLIIPVVITVFEDRSFTFITKTPPAAVLLKKAAKVEKGSGEPNKTKVASVTRAQVQEIAETKMPDLNAANVESAMLMVEGTARSMGITIQD</sequence>
<dbReference type="EMBL" id="AL596164">
    <property type="protein sequence ID" value="CAC95513.1"/>
    <property type="molecule type" value="Genomic_DNA"/>
</dbReference>
<dbReference type="PIR" id="AI1467">
    <property type="entry name" value="AI1467"/>
</dbReference>
<dbReference type="RefSeq" id="WP_003718336.1">
    <property type="nucleotide sequence ID" value="NC_003212.1"/>
</dbReference>
<dbReference type="SMR" id="P66055"/>
<dbReference type="STRING" id="272626.gene:17564607"/>
<dbReference type="GeneID" id="93238162"/>
<dbReference type="KEGG" id="lin:rplK"/>
<dbReference type="eggNOG" id="COG0080">
    <property type="taxonomic scope" value="Bacteria"/>
</dbReference>
<dbReference type="HOGENOM" id="CLU_074237_2_1_9"/>
<dbReference type="OrthoDB" id="9802408at2"/>
<dbReference type="Proteomes" id="UP000002513">
    <property type="component" value="Chromosome"/>
</dbReference>
<dbReference type="GO" id="GO:0022625">
    <property type="term" value="C:cytosolic large ribosomal subunit"/>
    <property type="evidence" value="ECO:0007669"/>
    <property type="project" value="TreeGrafter"/>
</dbReference>
<dbReference type="GO" id="GO:0070180">
    <property type="term" value="F:large ribosomal subunit rRNA binding"/>
    <property type="evidence" value="ECO:0007669"/>
    <property type="project" value="UniProtKB-UniRule"/>
</dbReference>
<dbReference type="GO" id="GO:0003735">
    <property type="term" value="F:structural constituent of ribosome"/>
    <property type="evidence" value="ECO:0007669"/>
    <property type="project" value="InterPro"/>
</dbReference>
<dbReference type="GO" id="GO:0006412">
    <property type="term" value="P:translation"/>
    <property type="evidence" value="ECO:0007669"/>
    <property type="project" value="UniProtKB-UniRule"/>
</dbReference>
<dbReference type="CDD" id="cd00349">
    <property type="entry name" value="Ribosomal_L11"/>
    <property type="match status" value="1"/>
</dbReference>
<dbReference type="FunFam" id="1.10.10.250:FF:000001">
    <property type="entry name" value="50S ribosomal protein L11"/>
    <property type="match status" value="1"/>
</dbReference>
<dbReference type="FunFam" id="3.30.1550.10:FF:000001">
    <property type="entry name" value="50S ribosomal protein L11"/>
    <property type="match status" value="1"/>
</dbReference>
<dbReference type="Gene3D" id="1.10.10.250">
    <property type="entry name" value="Ribosomal protein L11, C-terminal domain"/>
    <property type="match status" value="1"/>
</dbReference>
<dbReference type="Gene3D" id="3.30.1550.10">
    <property type="entry name" value="Ribosomal protein L11/L12, N-terminal domain"/>
    <property type="match status" value="1"/>
</dbReference>
<dbReference type="HAMAP" id="MF_00736">
    <property type="entry name" value="Ribosomal_uL11"/>
    <property type="match status" value="1"/>
</dbReference>
<dbReference type="InterPro" id="IPR000911">
    <property type="entry name" value="Ribosomal_uL11"/>
</dbReference>
<dbReference type="InterPro" id="IPR006519">
    <property type="entry name" value="Ribosomal_uL11_bac-typ"/>
</dbReference>
<dbReference type="InterPro" id="IPR020783">
    <property type="entry name" value="Ribosomal_uL11_C"/>
</dbReference>
<dbReference type="InterPro" id="IPR036769">
    <property type="entry name" value="Ribosomal_uL11_C_sf"/>
</dbReference>
<dbReference type="InterPro" id="IPR020784">
    <property type="entry name" value="Ribosomal_uL11_N"/>
</dbReference>
<dbReference type="InterPro" id="IPR036796">
    <property type="entry name" value="Ribosomal_uL11_N_sf"/>
</dbReference>
<dbReference type="NCBIfam" id="TIGR01632">
    <property type="entry name" value="L11_bact"/>
    <property type="match status" value="1"/>
</dbReference>
<dbReference type="PANTHER" id="PTHR11661">
    <property type="entry name" value="60S RIBOSOMAL PROTEIN L12"/>
    <property type="match status" value="1"/>
</dbReference>
<dbReference type="PANTHER" id="PTHR11661:SF1">
    <property type="entry name" value="LARGE RIBOSOMAL SUBUNIT PROTEIN UL11M"/>
    <property type="match status" value="1"/>
</dbReference>
<dbReference type="Pfam" id="PF00298">
    <property type="entry name" value="Ribosomal_L11"/>
    <property type="match status" value="1"/>
</dbReference>
<dbReference type="Pfam" id="PF03946">
    <property type="entry name" value="Ribosomal_L11_N"/>
    <property type="match status" value="1"/>
</dbReference>
<dbReference type="SMART" id="SM00649">
    <property type="entry name" value="RL11"/>
    <property type="match status" value="1"/>
</dbReference>
<dbReference type="SUPFAM" id="SSF54747">
    <property type="entry name" value="Ribosomal L11/L12e N-terminal domain"/>
    <property type="match status" value="1"/>
</dbReference>
<dbReference type="SUPFAM" id="SSF46906">
    <property type="entry name" value="Ribosomal protein L11, C-terminal domain"/>
    <property type="match status" value="1"/>
</dbReference>
<feature type="chain" id="PRO_0000104309" description="Large ribosomal subunit protein uL11">
    <location>
        <begin position="1"/>
        <end position="141"/>
    </location>
</feature>
<evidence type="ECO:0000255" key="1">
    <source>
        <dbReference type="HAMAP-Rule" id="MF_00736"/>
    </source>
</evidence>
<evidence type="ECO:0000305" key="2"/>
<proteinExistence type="inferred from homology"/>